<sequence>MTEAVETETVEPTTDEATAADVEPREPVYIDRPIQTVGRRKEAVVRVRLVPGTGKFNLDGRTLEAYFPNKVHQQLIKAPLVLVDRLESFDVYAHLDGGGPSGQAGALRLAIARALILVQPEDRPALKKAGFLTRDPRAIERKKYGLKKARKAPQYSKR</sequence>
<comment type="similarity">
    <text evidence="1">Belongs to the universal ribosomal protein uS9 family.</text>
</comment>
<reference key="1">
    <citation type="submission" date="2006-06" db="EMBL/GenBank/DDBJ databases">
        <title>Complete sequence of chromosome of Mycobacterium sp. MCS.</title>
        <authorList>
            <consortium name="US DOE Joint Genome Institute"/>
            <person name="Copeland A."/>
            <person name="Lucas S."/>
            <person name="Lapidus A."/>
            <person name="Barry K."/>
            <person name="Detter J.C."/>
            <person name="Glavina del Rio T."/>
            <person name="Hammon N."/>
            <person name="Israni S."/>
            <person name="Dalin E."/>
            <person name="Tice H."/>
            <person name="Pitluck S."/>
            <person name="Martinez M."/>
            <person name="Schmutz J."/>
            <person name="Larimer F."/>
            <person name="Land M."/>
            <person name="Hauser L."/>
            <person name="Kyrpides N."/>
            <person name="Kim E."/>
            <person name="Miller C.D."/>
            <person name="Hughes J.E."/>
            <person name="Anderson A.J."/>
            <person name="Sims R.C."/>
            <person name="Richardson P."/>
        </authorList>
    </citation>
    <scope>NUCLEOTIDE SEQUENCE [LARGE SCALE GENOMIC DNA]</scope>
    <source>
        <strain>MCS</strain>
    </source>
</reference>
<gene>
    <name evidence="1" type="primary">rpsI</name>
    <name type="ordered locus">Mmcs_1131</name>
</gene>
<evidence type="ECO:0000255" key="1">
    <source>
        <dbReference type="HAMAP-Rule" id="MF_00532"/>
    </source>
</evidence>
<evidence type="ECO:0000256" key="2">
    <source>
        <dbReference type="SAM" id="MobiDB-lite"/>
    </source>
</evidence>
<evidence type="ECO:0000305" key="3"/>
<dbReference type="EMBL" id="CP000384">
    <property type="protein sequence ID" value="ABG07244.1"/>
    <property type="molecule type" value="Genomic_DNA"/>
</dbReference>
<dbReference type="SMR" id="Q1BCZ0"/>
<dbReference type="KEGG" id="mmc:Mmcs_1131"/>
<dbReference type="HOGENOM" id="CLU_046483_2_0_11"/>
<dbReference type="BioCyc" id="MSP164756:G1G6O-1157-MONOMER"/>
<dbReference type="GO" id="GO:0005737">
    <property type="term" value="C:cytoplasm"/>
    <property type="evidence" value="ECO:0007669"/>
    <property type="project" value="UniProtKB-ARBA"/>
</dbReference>
<dbReference type="GO" id="GO:0015935">
    <property type="term" value="C:small ribosomal subunit"/>
    <property type="evidence" value="ECO:0007669"/>
    <property type="project" value="TreeGrafter"/>
</dbReference>
<dbReference type="GO" id="GO:0003723">
    <property type="term" value="F:RNA binding"/>
    <property type="evidence" value="ECO:0007669"/>
    <property type="project" value="TreeGrafter"/>
</dbReference>
<dbReference type="GO" id="GO:0003735">
    <property type="term" value="F:structural constituent of ribosome"/>
    <property type="evidence" value="ECO:0007669"/>
    <property type="project" value="InterPro"/>
</dbReference>
<dbReference type="GO" id="GO:0006412">
    <property type="term" value="P:translation"/>
    <property type="evidence" value="ECO:0007669"/>
    <property type="project" value="UniProtKB-UniRule"/>
</dbReference>
<dbReference type="FunFam" id="3.30.230.10:FF:000001">
    <property type="entry name" value="30S ribosomal protein S9"/>
    <property type="match status" value="1"/>
</dbReference>
<dbReference type="Gene3D" id="3.30.230.10">
    <property type="match status" value="1"/>
</dbReference>
<dbReference type="HAMAP" id="MF_00532_B">
    <property type="entry name" value="Ribosomal_uS9_B"/>
    <property type="match status" value="1"/>
</dbReference>
<dbReference type="InterPro" id="IPR020568">
    <property type="entry name" value="Ribosomal_Su5_D2-typ_SF"/>
</dbReference>
<dbReference type="InterPro" id="IPR000754">
    <property type="entry name" value="Ribosomal_uS9"/>
</dbReference>
<dbReference type="InterPro" id="IPR023035">
    <property type="entry name" value="Ribosomal_uS9_bac/plastid"/>
</dbReference>
<dbReference type="InterPro" id="IPR020574">
    <property type="entry name" value="Ribosomal_uS9_CS"/>
</dbReference>
<dbReference type="InterPro" id="IPR014721">
    <property type="entry name" value="Ribsml_uS5_D2-typ_fold_subgr"/>
</dbReference>
<dbReference type="NCBIfam" id="NF001099">
    <property type="entry name" value="PRK00132.1"/>
    <property type="match status" value="1"/>
</dbReference>
<dbReference type="PANTHER" id="PTHR21569">
    <property type="entry name" value="RIBOSOMAL PROTEIN S9"/>
    <property type="match status" value="1"/>
</dbReference>
<dbReference type="PANTHER" id="PTHR21569:SF1">
    <property type="entry name" value="SMALL RIBOSOMAL SUBUNIT PROTEIN US9M"/>
    <property type="match status" value="1"/>
</dbReference>
<dbReference type="Pfam" id="PF00380">
    <property type="entry name" value="Ribosomal_S9"/>
    <property type="match status" value="1"/>
</dbReference>
<dbReference type="SUPFAM" id="SSF54211">
    <property type="entry name" value="Ribosomal protein S5 domain 2-like"/>
    <property type="match status" value="1"/>
</dbReference>
<dbReference type="PROSITE" id="PS00360">
    <property type="entry name" value="RIBOSOMAL_S9"/>
    <property type="match status" value="1"/>
</dbReference>
<protein>
    <recommendedName>
        <fullName evidence="1">Small ribosomal subunit protein uS9</fullName>
    </recommendedName>
    <alternativeName>
        <fullName evidence="3">30S ribosomal protein S9</fullName>
    </alternativeName>
</protein>
<feature type="chain" id="PRO_1000051262" description="Small ribosomal subunit protein uS9">
    <location>
        <begin position="1"/>
        <end position="158"/>
    </location>
</feature>
<feature type="region of interest" description="Disordered" evidence="2">
    <location>
        <begin position="1"/>
        <end position="20"/>
    </location>
</feature>
<feature type="compositionally biased region" description="Low complexity" evidence="2">
    <location>
        <begin position="10"/>
        <end position="20"/>
    </location>
</feature>
<name>RS9_MYCSS</name>
<accession>Q1BCZ0</accession>
<proteinExistence type="inferred from homology"/>
<organism>
    <name type="scientific">Mycobacterium sp. (strain MCS)</name>
    <dbReference type="NCBI Taxonomy" id="164756"/>
    <lineage>
        <taxon>Bacteria</taxon>
        <taxon>Bacillati</taxon>
        <taxon>Actinomycetota</taxon>
        <taxon>Actinomycetes</taxon>
        <taxon>Mycobacteriales</taxon>
        <taxon>Mycobacteriaceae</taxon>
        <taxon>Mycobacterium</taxon>
    </lineage>
</organism>
<keyword id="KW-0687">Ribonucleoprotein</keyword>
<keyword id="KW-0689">Ribosomal protein</keyword>